<comment type="function">
    <text evidence="1">Might be involved in the organization and polarity of the actin cytoskeleton.</text>
</comment>
<comment type="subcellular location">
    <subcellularLocation>
        <location evidence="5">Membrane</location>
        <topology evidence="5">Single-pass membrane protein</topology>
    </subcellularLocation>
</comment>
<comment type="similarity">
    <text evidence="5">Belongs to the formin-like family. Class-I subfamily.</text>
</comment>
<keyword id="KW-0472">Membrane</keyword>
<keyword id="KW-1185">Reference proteome</keyword>
<keyword id="KW-0732">Signal</keyword>
<keyword id="KW-0812">Transmembrane</keyword>
<keyword id="KW-1133">Transmembrane helix</keyword>
<name>FH2_ARATH</name>
<protein>
    <recommendedName>
        <fullName>Formin-like protein 2</fullName>
        <shortName>AtFH2</shortName>
        <shortName>AtFORMIN-2</shortName>
    </recommendedName>
</protein>
<organism>
    <name type="scientific">Arabidopsis thaliana</name>
    <name type="common">Mouse-ear cress</name>
    <dbReference type="NCBI Taxonomy" id="3702"/>
    <lineage>
        <taxon>Eukaryota</taxon>
        <taxon>Viridiplantae</taxon>
        <taxon>Streptophyta</taxon>
        <taxon>Embryophyta</taxon>
        <taxon>Tracheophyta</taxon>
        <taxon>Spermatophyta</taxon>
        <taxon>Magnoliopsida</taxon>
        <taxon>eudicotyledons</taxon>
        <taxon>Gunneridae</taxon>
        <taxon>Pentapetalae</taxon>
        <taxon>rosids</taxon>
        <taxon>malvids</taxon>
        <taxon>Brassicales</taxon>
        <taxon>Brassicaceae</taxon>
        <taxon>Camelineae</taxon>
        <taxon>Arabidopsis</taxon>
    </lineage>
</organism>
<sequence length="894" mass="98320">MTTIPFCFLFVAFFFSSSTADQRHHSRHLLHQPFFPVVTAAPPPYQPPVSSQPPSPSPHTHHHHKKHLTTTTPPPHEKHLFSSVANPPPPPPSPPHPNPFFPSSDPTSTASHPPPAPPPPASLPTFPANISSLLFPTHNKQSKPPSNGHIARLVTITASVISAAALLSLFAVFIIFIRRTRHRRRSSPADDTKSTRSDALQLFNASPSDGSKKQKQHQQPPKYTSSHTSSEFLYLGTLVNSRSNGLEQQKSPISLSGGITGVLELPPPASSSSSSSYSQYHKLGSPELRPLPPLPKLQSFTPVYKSTEQLNPKRQDFDGDDNENDEFFSPRGSSGRKQSPTRVSDVDQIDNRSINGSGSNSCSPTNFAPSLNASPGTSLKPKSISPPVSLHSQISSNNGIPKRLCPARPPPPPPPPPQVSEVPATMSHSLPGDDSDPEKKVETMKPKLKTLHWDKVRASSSRVMVWDQIKSNSFQVNEEMIETLFKVNDPTSRTRDGVVQSVSQENRFLDPRKSHNIAILLRALNVTADEVCEALIEGNSDTLGPELLECLLKMAPTKEEEDKLKELKDDDDGSPSKIGPAEKFLKALLNIPFAFKRIDAMLYIVKFESEIEYLNRSFDTLEAATGELKNTRMFLKLLEAVLKTGNRMNIGTNRGDAHAFKLDTLLKLVDIKGADGKTTLLHFVVQEIIKFEGARVPFTPSQSHIGDNMAEQSAFQDDLELKKLGLQVVSGLSSQLINVKKAAAMDSNSLINETAEIARGIAKVKEVITELKQETGVERFLESMNSFLNKGEKEITELQSHGDNVMKMVKEVTEYFHGNSETHPFRIFAVVRDFLTILDQVCKEVGRVNERTVYGSMPLHSPSNQTATPLFPVVINNNSRLSPSGSLDDDDGSF</sequence>
<feature type="signal peptide" evidence="2">
    <location>
        <begin position="1"/>
        <end position="20"/>
    </location>
</feature>
<feature type="chain" id="PRO_0000308527" description="Formin-like protein 2">
    <location>
        <begin position="21"/>
        <end position="894"/>
    </location>
</feature>
<feature type="transmembrane region" description="Helical" evidence="2">
    <location>
        <begin position="156"/>
        <end position="176"/>
    </location>
</feature>
<feature type="domain" description="FH2" evidence="3">
    <location>
        <begin position="438"/>
        <end position="864"/>
    </location>
</feature>
<feature type="region of interest" description="Disordered" evidence="4">
    <location>
        <begin position="41"/>
        <end position="129"/>
    </location>
</feature>
<feature type="region of interest" description="Disordered" evidence="4">
    <location>
        <begin position="203"/>
        <end position="228"/>
    </location>
</feature>
<feature type="region of interest" description="Disordered" evidence="4">
    <location>
        <begin position="264"/>
        <end position="440"/>
    </location>
</feature>
<feature type="compositionally biased region" description="Pro residues" evidence="4">
    <location>
        <begin position="41"/>
        <end position="57"/>
    </location>
</feature>
<feature type="compositionally biased region" description="Basic residues" evidence="4">
    <location>
        <begin position="59"/>
        <end position="68"/>
    </location>
</feature>
<feature type="compositionally biased region" description="Pro residues" evidence="4">
    <location>
        <begin position="86"/>
        <end position="100"/>
    </location>
</feature>
<feature type="compositionally biased region" description="Low complexity" evidence="4">
    <location>
        <begin position="101"/>
        <end position="111"/>
    </location>
</feature>
<feature type="compositionally biased region" description="Pro residues" evidence="4">
    <location>
        <begin position="112"/>
        <end position="122"/>
    </location>
</feature>
<feature type="compositionally biased region" description="Low complexity" evidence="4">
    <location>
        <begin position="270"/>
        <end position="288"/>
    </location>
</feature>
<feature type="compositionally biased region" description="Polar residues" evidence="4">
    <location>
        <begin position="298"/>
        <end position="310"/>
    </location>
</feature>
<feature type="compositionally biased region" description="Polar residues" evidence="4">
    <location>
        <begin position="331"/>
        <end position="342"/>
    </location>
</feature>
<feature type="compositionally biased region" description="Polar residues" evidence="4">
    <location>
        <begin position="351"/>
        <end position="377"/>
    </location>
</feature>
<feature type="compositionally biased region" description="Polar residues" evidence="4">
    <location>
        <begin position="390"/>
        <end position="399"/>
    </location>
</feature>
<feature type="compositionally biased region" description="Pro residues" evidence="4">
    <location>
        <begin position="407"/>
        <end position="418"/>
    </location>
</feature>
<dbReference type="EMBL" id="AC002333">
    <property type="protein sequence ID" value="AAB64026.1"/>
    <property type="molecule type" value="Genomic_DNA"/>
</dbReference>
<dbReference type="EMBL" id="CP002685">
    <property type="protein sequence ID" value="AEC10328.1"/>
    <property type="molecule type" value="Genomic_DNA"/>
</dbReference>
<dbReference type="PIR" id="F84870">
    <property type="entry name" value="F84870"/>
</dbReference>
<dbReference type="RefSeq" id="NP_181908.1">
    <property type="nucleotide sequence ID" value="NM_129942.3"/>
</dbReference>
<dbReference type="SMR" id="O22824"/>
<dbReference type="FunCoup" id="O22824">
    <property type="interactions" value="3"/>
</dbReference>
<dbReference type="STRING" id="3702.O22824"/>
<dbReference type="iPTMnet" id="O22824"/>
<dbReference type="PaxDb" id="3702-AT2G43800.1"/>
<dbReference type="ProteomicsDB" id="230096"/>
<dbReference type="EnsemblPlants" id="AT2G43800.1">
    <property type="protein sequence ID" value="AT2G43800.1"/>
    <property type="gene ID" value="AT2G43800"/>
</dbReference>
<dbReference type="GeneID" id="818984"/>
<dbReference type="Gramene" id="AT2G43800.1">
    <property type="protein sequence ID" value="AT2G43800.1"/>
    <property type="gene ID" value="AT2G43800"/>
</dbReference>
<dbReference type="KEGG" id="ath:AT2G43800"/>
<dbReference type="Araport" id="AT2G43800"/>
<dbReference type="TAIR" id="AT2G43800">
    <property type="gene designation" value="FH2"/>
</dbReference>
<dbReference type="eggNOG" id="KOG1922">
    <property type="taxonomic scope" value="Eukaryota"/>
</dbReference>
<dbReference type="HOGENOM" id="CLU_007699_0_0_1"/>
<dbReference type="InParanoid" id="O22824"/>
<dbReference type="OMA" id="FHGNSET"/>
<dbReference type="PhylomeDB" id="O22824"/>
<dbReference type="PRO" id="PR:O22824"/>
<dbReference type="Proteomes" id="UP000006548">
    <property type="component" value="Chromosome 2"/>
</dbReference>
<dbReference type="ExpressionAtlas" id="O22824">
    <property type="expression patterns" value="baseline and differential"/>
</dbReference>
<dbReference type="GO" id="GO:0016020">
    <property type="term" value="C:membrane"/>
    <property type="evidence" value="ECO:0007669"/>
    <property type="project" value="UniProtKB-SubCell"/>
</dbReference>
<dbReference type="GO" id="GO:0003779">
    <property type="term" value="F:actin binding"/>
    <property type="evidence" value="ECO:0000250"/>
    <property type="project" value="TAIR"/>
</dbReference>
<dbReference type="GO" id="GO:0051015">
    <property type="term" value="F:actin filament binding"/>
    <property type="evidence" value="ECO:0007669"/>
    <property type="project" value="InterPro"/>
</dbReference>
<dbReference type="GO" id="GO:0045010">
    <property type="term" value="P:actin nucleation"/>
    <property type="evidence" value="ECO:0007669"/>
    <property type="project" value="InterPro"/>
</dbReference>
<dbReference type="GO" id="GO:0051016">
    <property type="term" value="P:barbed-end actin filament capping"/>
    <property type="evidence" value="ECO:0000314"/>
    <property type="project" value="TAIR"/>
</dbReference>
<dbReference type="GO" id="GO:0010497">
    <property type="term" value="P:plasmodesmata-mediated intercellular transport"/>
    <property type="evidence" value="ECO:0000315"/>
    <property type="project" value="TAIR"/>
</dbReference>
<dbReference type="Gene3D" id="1.20.58.2220">
    <property type="entry name" value="Formin, FH2 domain"/>
    <property type="match status" value="1"/>
</dbReference>
<dbReference type="InterPro" id="IPR015425">
    <property type="entry name" value="FH2_Formin"/>
</dbReference>
<dbReference type="InterPro" id="IPR042201">
    <property type="entry name" value="FH2_Formin_sf"/>
</dbReference>
<dbReference type="InterPro" id="IPR027643">
    <property type="entry name" value="Formin-like_plant"/>
</dbReference>
<dbReference type="PANTHER" id="PTHR23213">
    <property type="entry name" value="FORMIN-RELATED"/>
    <property type="match status" value="1"/>
</dbReference>
<dbReference type="PANTHER" id="PTHR23213:SF368">
    <property type="entry name" value="HISTONE H3-K79 METHYLTRANSFERASE"/>
    <property type="match status" value="1"/>
</dbReference>
<dbReference type="Pfam" id="PF02181">
    <property type="entry name" value="FH2"/>
    <property type="match status" value="1"/>
</dbReference>
<dbReference type="SMART" id="SM00498">
    <property type="entry name" value="FH2"/>
    <property type="match status" value="1"/>
</dbReference>
<dbReference type="SUPFAM" id="SSF101447">
    <property type="entry name" value="Formin homology 2 domain (FH2 domain)"/>
    <property type="match status" value="1"/>
</dbReference>
<dbReference type="PROSITE" id="PS51444">
    <property type="entry name" value="FH2"/>
    <property type="match status" value="1"/>
</dbReference>
<gene>
    <name type="primary">FH2</name>
    <name type="ordered locus">At2g43800</name>
    <name type="ORF">F18O19.9</name>
</gene>
<evidence type="ECO:0000250" key="1"/>
<evidence type="ECO:0000255" key="2"/>
<evidence type="ECO:0000255" key="3">
    <source>
        <dbReference type="PROSITE-ProRule" id="PRU00774"/>
    </source>
</evidence>
<evidence type="ECO:0000256" key="4">
    <source>
        <dbReference type="SAM" id="MobiDB-lite"/>
    </source>
</evidence>
<evidence type="ECO:0000305" key="5"/>
<reference key="1">
    <citation type="journal article" date="1999" name="Nature">
        <title>Sequence and analysis of chromosome 2 of the plant Arabidopsis thaliana.</title>
        <authorList>
            <person name="Lin X."/>
            <person name="Kaul S."/>
            <person name="Rounsley S.D."/>
            <person name="Shea T.P."/>
            <person name="Benito M.-I."/>
            <person name="Town C.D."/>
            <person name="Fujii C.Y."/>
            <person name="Mason T.M."/>
            <person name="Bowman C.L."/>
            <person name="Barnstead M.E."/>
            <person name="Feldblyum T.V."/>
            <person name="Buell C.R."/>
            <person name="Ketchum K.A."/>
            <person name="Lee J.J."/>
            <person name="Ronning C.M."/>
            <person name="Koo H.L."/>
            <person name="Moffat K.S."/>
            <person name="Cronin L.A."/>
            <person name="Shen M."/>
            <person name="Pai G."/>
            <person name="Van Aken S."/>
            <person name="Umayam L."/>
            <person name="Tallon L.J."/>
            <person name="Gill J.E."/>
            <person name="Adams M.D."/>
            <person name="Carrera A.J."/>
            <person name="Creasy T.H."/>
            <person name="Goodman H.M."/>
            <person name="Somerville C.R."/>
            <person name="Copenhaver G.P."/>
            <person name="Preuss D."/>
            <person name="Nierman W.C."/>
            <person name="White O."/>
            <person name="Eisen J.A."/>
            <person name="Salzberg S.L."/>
            <person name="Fraser C.M."/>
            <person name="Venter J.C."/>
        </authorList>
    </citation>
    <scope>NUCLEOTIDE SEQUENCE [LARGE SCALE GENOMIC DNA]</scope>
    <source>
        <strain>cv. Columbia</strain>
    </source>
</reference>
<reference key="2">
    <citation type="journal article" date="2017" name="Plant J.">
        <title>Araport11: a complete reannotation of the Arabidopsis thaliana reference genome.</title>
        <authorList>
            <person name="Cheng C.Y."/>
            <person name="Krishnakumar V."/>
            <person name="Chan A.P."/>
            <person name="Thibaud-Nissen F."/>
            <person name="Schobel S."/>
            <person name="Town C.D."/>
        </authorList>
    </citation>
    <scope>GENOME REANNOTATION</scope>
    <source>
        <strain>cv. Columbia</strain>
    </source>
</reference>
<reference key="3">
    <citation type="journal article" date="2000" name="Genome Biol.">
        <title>Are plant formins integral membrane proteins?</title>
        <authorList>
            <person name="Cvrckova F."/>
        </authorList>
    </citation>
    <scope>GENE FAMILY ORGANIZATION</scope>
</reference>
<reference key="4">
    <citation type="journal article" date="2002" name="Trends Plant Sci.">
        <title>Formins: intermediates in signal-transduction cascades that affect cytoskeletal reorganization.</title>
        <authorList>
            <person name="Deeks M.J."/>
            <person name="Hussey P.J."/>
            <person name="Davies B."/>
        </authorList>
    </citation>
    <scope>GENE FAMILY ORGANIZATION</scope>
    <scope>NOMENCLATURE</scope>
</reference>
<reference key="5">
    <citation type="journal article" date="2004" name="BMC Genomics">
        <title>Formin homology 2 domains occur in multiple contexts in angiosperms.</title>
        <authorList>
            <person name="Cvrckova F."/>
            <person name="Novotny M."/>
            <person name="Pickova D."/>
            <person name="Zarsky V."/>
        </authorList>
    </citation>
    <scope>GENE FAMILY ORGANIZATION</scope>
    <scope>NOMENCLATURE</scope>
</reference>
<accession>O22824</accession>
<proteinExistence type="inferred from homology"/>